<organism>
    <name type="scientific">Neoponera goeldii</name>
    <name type="common">Ponerine ant</name>
    <name type="synonym">Pachycondyla goeldii</name>
    <dbReference type="NCBI Taxonomy" id="3057131"/>
    <lineage>
        <taxon>Eukaryota</taxon>
        <taxon>Metazoa</taxon>
        <taxon>Ecdysozoa</taxon>
        <taxon>Arthropoda</taxon>
        <taxon>Hexapoda</taxon>
        <taxon>Insecta</taxon>
        <taxon>Pterygota</taxon>
        <taxon>Neoptera</taxon>
        <taxon>Endopterygota</taxon>
        <taxon>Hymenoptera</taxon>
        <taxon>Apocrita</taxon>
        <taxon>Aculeata</taxon>
        <taxon>Formicoidea</taxon>
        <taxon>Formicidae</taxon>
        <taxon>Ponerinae</taxon>
        <taxon>Ponerini</taxon>
        <taxon>Neoponera</taxon>
    </lineage>
</organism>
<protein>
    <recommendedName>
        <fullName evidence="4">U1-poneritoxin-Ng3g</fullName>
        <shortName evidence="4">U1-PONTX-Ng3g</shortName>
    </recommendedName>
    <alternativeName>
        <fullName evidence="5">Poneratoxin</fullName>
    </alternativeName>
    <alternativeName>
        <fullName evidence="3">Ponericin-G7</fullName>
    </alternativeName>
</protein>
<comment type="function">
    <text evidence="1">Has activity against Gram-positive bacteria and S.cerevisiae. Has non-hemolytic activity.</text>
</comment>
<comment type="subcellular location">
    <subcellularLocation>
        <location evidence="2">Secreted</location>
    </subcellularLocation>
</comment>
<comment type="tissue specificity">
    <text evidence="6">Expressed by the venom gland.</text>
</comment>
<comment type="mass spectrometry"/>
<comment type="similarity">
    <text evidence="5">Belongs to the ponericin-G family.</text>
</comment>
<name>GTX3G_NEOGO</name>
<sequence>GLVDVLGKVGGLIKKLLPG</sequence>
<evidence type="ECO:0000250" key="1">
    <source>
        <dbReference type="UniProtKB" id="P82419"/>
    </source>
</evidence>
<evidence type="ECO:0000269" key="2">
    <source>
    </source>
</evidence>
<evidence type="ECO:0000303" key="3">
    <source>
    </source>
</evidence>
<evidence type="ECO:0000303" key="4">
    <source>
    </source>
</evidence>
<evidence type="ECO:0000305" key="5"/>
<evidence type="ECO:0000305" key="6">
    <source>
    </source>
</evidence>
<dbReference type="GO" id="GO:0005576">
    <property type="term" value="C:extracellular region"/>
    <property type="evidence" value="ECO:0007669"/>
    <property type="project" value="UniProtKB-SubCell"/>
</dbReference>
<dbReference type="GO" id="GO:0042742">
    <property type="term" value="P:defense response to bacterium"/>
    <property type="evidence" value="ECO:0007669"/>
    <property type="project" value="UniProtKB-KW"/>
</dbReference>
<dbReference type="GO" id="GO:0050832">
    <property type="term" value="P:defense response to fungus"/>
    <property type="evidence" value="ECO:0007669"/>
    <property type="project" value="UniProtKB-KW"/>
</dbReference>
<dbReference type="GO" id="GO:0031640">
    <property type="term" value="P:killing of cells of another organism"/>
    <property type="evidence" value="ECO:0007669"/>
    <property type="project" value="UniProtKB-KW"/>
</dbReference>
<accession>P82420</accession>
<feature type="peptide" id="PRO_0000044191" description="U1-poneritoxin-Ng3g" evidence="2">
    <location>
        <begin position="1"/>
        <end position="19"/>
    </location>
</feature>
<reference key="1">
    <citation type="journal article" date="2001" name="J. Biol. Chem.">
        <title>Ponericins, new antibacterial and insecticidal peptides from the venom of the ant Pachycondyla goeldii.</title>
        <authorList>
            <person name="Orivel J."/>
            <person name="Redeker V."/>
            <person name="Le Caer J.-P."/>
            <person name="Krier F."/>
            <person name="Revol-Junelles A.-M."/>
            <person name="Longeon A."/>
            <person name="Chafotte A."/>
            <person name="Dejean A."/>
            <person name="Rossier J."/>
        </authorList>
    </citation>
    <scope>PROTEIN SEQUENCE</scope>
    <scope>MASS SPECTROMETRY</scope>
    <scope>SUBCELLULAR LOCATION</scope>
    <source>
        <tissue>Venom</tissue>
    </source>
</reference>
<reference key="2">
    <citation type="journal article" date="2016" name="Toxins">
        <title>The biochemical toxin arsenal from ant venoms.</title>
        <authorList>
            <person name="Touchard A."/>
            <person name="Aili S.R."/>
            <person name="Fox E.G."/>
            <person name="Escoubas P."/>
            <person name="Orivel J."/>
            <person name="Nicholson G.M."/>
            <person name="Dejean A."/>
        </authorList>
    </citation>
    <scope>REVIEW</scope>
    <scope>NOMENCLATURE</scope>
</reference>
<proteinExistence type="evidence at protein level"/>
<keyword id="KW-0044">Antibiotic</keyword>
<keyword id="KW-0929">Antimicrobial</keyword>
<keyword id="KW-0903">Direct protein sequencing</keyword>
<keyword id="KW-0295">Fungicide</keyword>
<keyword id="KW-0964">Secreted</keyword>